<comment type="function">
    <text evidence="1">An essential GTPase which binds GTP, GDP and possibly (p)ppGpp with moderate affinity, with high nucleotide exchange rates and a fairly low GTP hydrolysis rate. Plays a role in control of the cell cycle, stress response, ribosome biogenesis and in those bacteria that undergo differentiation, in morphogenesis control.</text>
</comment>
<comment type="cofactor">
    <cofactor evidence="1">
        <name>Mg(2+)</name>
        <dbReference type="ChEBI" id="CHEBI:18420"/>
    </cofactor>
</comment>
<comment type="subunit">
    <text evidence="1">Monomer.</text>
</comment>
<comment type="subcellular location">
    <subcellularLocation>
        <location evidence="1">Cytoplasm</location>
    </subcellularLocation>
</comment>
<comment type="similarity">
    <text evidence="1">Belongs to the TRAFAC class OBG-HflX-like GTPase superfamily. OBG GTPase family.</text>
</comment>
<evidence type="ECO:0000255" key="1">
    <source>
        <dbReference type="HAMAP-Rule" id="MF_01454"/>
    </source>
</evidence>
<evidence type="ECO:0000255" key="2">
    <source>
        <dbReference type="PROSITE-ProRule" id="PRU01231"/>
    </source>
</evidence>
<keyword id="KW-0963">Cytoplasm</keyword>
<keyword id="KW-0342">GTP-binding</keyword>
<keyword id="KW-0378">Hydrolase</keyword>
<keyword id="KW-0460">Magnesium</keyword>
<keyword id="KW-0479">Metal-binding</keyword>
<keyword id="KW-0547">Nucleotide-binding</keyword>
<name>OBG_FRATW</name>
<protein>
    <recommendedName>
        <fullName evidence="1">GTPase Obg</fullName>
        <ecNumber evidence="1">3.6.5.-</ecNumber>
    </recommendedName>
    <alternativeName>
        <fullName evidence="1">GTP-binding protein Obg</fullName>
    </alternativeName>
</protein>
<reference key="1">
    <citation type="journal article" date="2007" name="PLoS ONE">
        <title>Complete genomic characterization of a pathogenic A.II strain of Francisella tularensis subspecies tularensis.</title>
        <authorList>
            <person name="Beckstrom-Sternberg S.M."/>
            <person name="Auerbach R.K."/>
            <person name="Godbole S."/>
            <person name="Pearson J.V."/>
            <person name="Beckstrom-Sternberg J.S."/>
            <person name="Deng Z."/>
            <person name="Munk C."/>
            <person name="Kubota K."/>
            <person name="Zhou Y."/>
            <person name="Bruce D."/>
            <person name="Noronha J."/>
            <person name="Scheuermann R.H."/>
            <person name="Wang A."/>
            <person name="Wei X."/>
            <person name="Wang J."/>
            <person name="Hao J."/>
            <person name="Wagner D.M."/>
            <person name="Brettin T.S."/>
            <person name="Brown N."/>
            <person name="Gilna P."/>
            <person name="Keim P.S."/>
        </authorList>
    </citation>
    <scope>NUCLEOTIDE SEQUENCE [LARGE SCALE GENOMIC DNA]</scope>
    <source>
        <strain>WY96-3418</strain>
    </source>
</reference>
<sequence>MRFVDEVVIKLQAGKGGNGCVSFRREKYVPRGGPDGGDGGNGGSIYLKADENVNTLIDYRYKREYYAENGRPGEGRNCYGKAGEDLYLVVPVGTSVFNIDTNKKIGEVLQHGQTFKLVSGGKRGIGNTHFKSSTNQAPRKFTLGEEGEYKEVRLELNLLADVALLGLPNAGKSTLIRSVSEATPKVADYPFTTMYPHLGVVKVGVDSFVMADIPGVIEGAAEGAGLGLRFLKHLTRARCVLHVVDICPFNESDPVENYFAVEKELEKYSQELFDKPRFLVINKIDLLADKVEQKCQEFVEQIGYQGNYYTISAAMKKGTDELAKKLNEFLQKQQ</sequence>
<proteinExistence type="inferred from homology"/>
<gene>
    <name evidence="1" type="primary">obg</name>
    <name type="ordered locus">FTW_0066</name>
</gene>
<dbReference type="EC" id="3.6.5.-" evidence="1"/>
<dbReference type="EMBL" id="CP000608">
    <property type="protein sequence ID" value="ABO46065.1"/>
    <property type="molecule type" value="Genomic_DNA"/>
</dbReference>
<dbReference type="SMR" id="A4IVW3"/>
<dbReference type="KEGG" id="ftw:FTW_0066"/>
<dbReference type="HOGENOM" id="CLU_011747_2_0_6"/>
<dbReference type="GO" id="GO:0005737">
    <property type="term" value="C:cytoplasm"/>
    <property type="evidence" value="ECO:0007669"/>
    <property type="project" value="UniProtKB-SubCell"/>
</dbReference>
<dbReference type="GO" id="GO:0005525">
    <property type="term" value="F:GTP binding"/>
    <property type="evidence" value="ECO:0007669"/>
    <property type="project" value="UniProtKB-UniRule"/>
</dbReference>
<dbReference type="GO" id="GO:0003924">
    <property type="term" value="F:GTPase activity"/>
    <property type="evidence" value="ECO:0007669"/>
    <property type="project" value="UniProtKB-UniRule"/>
</dbReference>
<dbReference type="GO" id="GO:0000287">
    <property type="term" value="F:magnesium ion binding"/>
    <property type="evidence" value="ECO:0007669"/>
    <property type="project" value="InterPro"/>
</dbReference>
<dbReference type="GO" id="GO:0042254">
    <property type="term" value="P:ribosome biogenesis"/>
    <property type="evidence" value="ECO:0007669"/>
    <property type="project" value="UniProtKB-UniRule"/>
</dbReference>
<dbReference type="CDD" id="cd01898">
    <property type="entry name" value="Obg"/>
    <property type="match status" value="1"/>
</dbReference>
<dbReference type="FunFam" id="2.70.210.12:FF:000001">
    <property type="entry name" value="GTPase Obg"/>
    <property type="match status" value="1"/>
</dbReference>
<dbReference type="Gene3D" id="2.70.210.12">
    <property type="entry name" value="GTP1/OBG domain"/>
    <property type="match status" value="1"/>
</dbReference>
<dbReference type="Gene3D" id="3.40.50.300">
    <property type="entry name" value="P-loop containing nucleotide triphosphate hydrolases"/>
    <property type="match status" value="1"/>
</dbReference>
<dbReference type="HAMAP" id="MF_01454">
    <property type="entry name" value="GTPase_Obg"/>
    <property type="match status" value="1"/>
</dbReference>
<dbReference type="InterPro" id="IPR031167">
    <property type="entry name" value="G_OBG"/>
</dbReference>
<dbReference type="InterPro" id="IPR006073">
    <property type="entry name" value="GTP-bd"/>
</dbReference>
<dbReference type="InterPro" id="IPR014100">
    <property type="entry name" value="GTP-bd_Obg/CgtA"/>
</dbReference>
<dbReference type="InterPro" id="IPR006074">
    <property type="entry name" value="GTP1-OBG_CS"/>
</dbReference>
<dbReference type="InterPro" id="IPR006169">
    <property type="entry name" value="GTP1_OBG_dom"/>
</dbReference>
<dbReference type="InterPro" id="IPR036726">
    <property type="entry name" value="GTP1_OBG_dom_sf"/>
</dbReference>
<dbReference type="InterPro" id="IPR045086">
    <property type="entry name" value="OBG_GTPase"/>
</dbReference>
<dbReference type="InterPro" id="IPR027417">
    <property type="entry name" value="P-loop_NTPase"/>
</dbReference>
<dbReference type="NCBIfam" id="TIGR02729">
    <property type="entry name" value="Obg_CgtA"/>
    <property type="match status" value="1"/>
</dbReference>
<dbReference type="NCBIfam" id="NF008955">
    <property type="entry name" value="PRK12297.1"/>
    <property type="match status" value="1"/>
</dbReference>
<dbReference type="NCBIfam" id="NF008956">
    <property type="entry name" value="PRK12299.1"/>
    <property type="match status" value="1"/>
</dbReference>
<dbReference type="PANTHER" id="PTHR11702">
    <property type="entry name" value="DEVELOPMENTALLY REGULATED GTP-BINDING PROTEIN-RELATED"/>
    <property type="match status" value="1"/>
</dbReference>
<dbReference type="PANTHER" id="PTHR11702:SF31">
    <property type="entry name" value="MITOCHONDRIAL RIBOSOME-ASSOCIATED GTPASE 2"/>
    <property type="match status" value="1"/>
</dbReference>
<dbReference type="Pfam" id="PF01018">
    <property type="entry name" value="GTP1_OBG"/>
    <property type="match status" value="1"/>
</dbReference>
<dbReference type="Pfam" id="PF01926">
    <property type="entry name" value="MMR_HSR1"/>
    <property type="match status" value="1"/>
</dbReference>
<dbReference type="PIRSF" id="PIRSF002401">
    <property type="entry name" value="GTP_bd_Obg/CgtA"/>
    <property type="match status" value="1"/>
</dbReference>
<dbReference type="PRINTS" id="PR00326">
    <property type="entry name" value="GTP1OBG"/>
</dbReference>
<dbReference type="SUPFAM" id="SSF82051">
    <property type="entry name" value="Obg GTP-binding protein N-terminal domain"/>
    <property type="match status" value="1"/>
</dbReference>
<dbReference type="SUPFAM" id="SSF52540">
    <property type="entry name" value="P-loop containing nucleoside triphosphate hydrolases"/>
    <property type="match status" value="1"/>
</dbReference>
<dbReference type="PROSITE" id="PS51710">
    <property type="entry name" value="G_OBG"/>
    <property type="match status" value="1"/>
</dbReference>
<dbReference type="PROSITE" id="PS00905">
    <property type="entry name" value="GTP1_OBG"/>
    <property type="match status" value="1"/>
</dbReference>
<dbReference type="PROSITE" id="PS51883">
    <property type="entry name" value="OBG"/>
    <property type="match status" value="1"/>
</dbReference>
<organism>
    <name type="scientific">Francisella tularensis subsp. tularensis (strain WY96-3418)</name>
    <dbReference type="NCBI Taxonomy" id="418136"/>
    <lineage>
        <taxon>Bacteria</taxon>
        <taxon>Pseudomonadati</taxon>
        <taxon>Pseudomonadota</taxon>
        <taxon>Gammaproteobacteria</taxon>
        <taxon>Thiotrichales</taxon>
        <taxon>Francisellaceae</taxon>
        <taxon>Francisella</taxon>
    </lineage>
</organism>
<accession>A4IVW3</accession>
<feature type="chain" id="PRO_0000385943" description="GTPase Obg">
    <location>
        <begin position="1"/>
        <end position="334"/>
    </location>
</feature>
<feature type="domain" description="Obg" evidence="2">
    <location>
        <begin position="1"/>
        <end position="159"/>
    </location>
</feature>
<feature type="domain" description="OBG-type G" evidence="1">
    <location>
        <begin position="160"/>
        <end position="331"/>
    </location>
</feature>
<feature type="binding site" evidence="1">
    <location>
        <begin position="166"/>
        <end position="173"/>
    </location>
    <ligand>
        <name>GTP</name>
        <dbReference type="ChEBI" id="CHEBI:37565"/>
    </ligand>
</feature>
<feature type="binding site" evidence="1">
    <location>
        <position position="173"/>
    </location>
    <ligand>
        <name>Mg(2+)</name>
        <dbReference type="ChEBI" id="CHEBI:18420"/>
    </ligand>
</feature>
<feature type="binding site" evidence="1">
    <location>
        <begin position="191"/>
        <end position="195"/>
    </location>
    <ligand>
        <name>GTP</name>
        <dbReference type="ChEBI" id="CHEBI:37565"/>
    </ligand>
</feature>
<feature type="binding site" evidence="1">
    <location>
        <position position="193"/>
    </location>
    <ligand>
        <name>Mg(2+)</name>
        <dbReference type="ChEBI" id="CHEBI:18420"/>
    </ligand>
</feature>
<feature type="binding site" evidence="1">
    <location>
        <begin position="212"/>
        <end position="215"/>
    </location>
    <ligand>
        <name>GTP</name>
        <dbReference type="ChEBI" id="CHEBI:37565"/>
    </ligand>
</feature>
<feature type="binding site" evidence="1">
    <location>
        <begin position="282"/>
        <end position="285"/>
    </location>
    <ligand>
        <name>GTP</name>
        <dbReference type="ChEBI" id="CHEBI:37565"/>
    </ligand>
</feature>
<feature type="binding site" evidence="1">
    <location>
        <begin position="312"/>
        <end position="314"/>
    </location>
    <ligand>
        <name>GTP</name>
        <dbReference type="ChEBI" id="CHEBI:37565"/>
    </ligand>
</feature>